<comment type="function">
    <text evidence="1">NDH-1 shuttles electrons from NADH, via FMN and iron-sulfur (Fe-S) centers, to quinones in the respiratory chain. The immediate electron acceptor for the enzyme in this species is believed to be ubiquinone. Couples the redox reaction to proton translocation (for every two electrons transferred, four hydrogen ions are translocated across the cytoplasmic membrane), and thus conserves the redox energy in a proton gradient.</text>
</comment>
<comment type="catalytic activity">
    <reaction evidence="1">
        <text>a quinone + NADH + 5 H(+)(in) = a quinol + NAD(+) + 4 H(+)(out)</text>
        <dbReference type="Rhea" id="RHEA:57888"/>
        <dbReference type="ChEBI" id="CHEBI:15378"/>
        <dbReference type="ChEBI" id="CHEBI:24646"/>
        <dbReference type="ChEBI" id="CHEBI:57540"/>
        <dbReference type="ChEBI" id="CHEBI:57945"/>
        <dbReference type="ChEBI" id="CHEBI:132124"/>
    </reaction>
</comment>
<comment type="subunit">
    <text evidence="1">NDH-1 is composed of 13 different subunits. Subunits NuoA, H, J, K, L, M, N constitute the membrane sector of the complex.</text>
</comment>
<comment type="subcellular location">
    <subcellularLocation>
        <location evidence="1">Cell inner membrane</location>
        <topology evidence="1">Multi-pass membrane protein</topology>
    </subcellularLocation>
</comment>
<comment type="similarity">
    <text evidence="1">Belongs to the complex I subunit 3 family.</text>
</comment>
<name>NUOA_PECCC</name>
<reference key="1">
    <citation type="journal article" date="1998" name="Mol. Microbiol.">
        <title>The hexA gene of Erwinia carotovora encodes a LysR homologue and regulates motility and the expression of multiple virulence determinants.</title>
        <authorList>
            <person name="Harris S.J."/>
            <person name="Shih Y.L."/>
            <person name="Bentley S.D."/>
            <person name="Salmond G.P.C."/>
        </authorList>
    </citation>
    <scope>NUCLEOTIDE SEQUENCE [GENOMIC DNA]</scope>
    <source>
        <strain>SCRI 193</strain>
    </source>
</reference>
<sequence length="146" mass="16156">MSTTTEILAHHWAFGLFLIIAVGLCVFMLTGGFLLGGRAKGRAKNVPYESGIDSVGSARLRLSAKFYLVAMFFVIFDVEALYLYAWAVSIKESGWIGFIEATIFILVLLAGLIYLVRVGALDWTPVRSKRQVVKSDIINTTNNHPQ</sequence>
<protein>
    <recommendedName>
        <fullName evidence="1">NADH-quinone oxidoreductase subunit A</fullName>
        <ecNumber evidence="1">7.1.1.-</ecNumber>
    </recommendedName>
    <alternativeName>
        <fullName evidence="1">NADH dehydrogenase I subunit A</fullName>
    </alternativeName>
    <alternativeName>
        <fullName evidence="1">NDH-1 subunit A</fullName>
    </alternativeName>
    <alternativeName>
        <fullName evidence="1">NUO1</fullName>
    </alternativeName>
</protein>
<keyword id="KW-0997">Cell inner membrane</keyword>
<keyword id="KW-1003">Cell membrane</keyword>
<keyword id="KW-0472">Membrane</keyword>
<keyword id="KW-0520">NAD</keyword>
<keyword id="KW-0874">Quinone</keyword>
<keyword id="KW-1278">Translocase</keyword>
<keyword id="KW-0812">Transmembrane</keyword>
<keyword id="KW-1133">Transmembrane helix</keyword>
<keyword id="KW-0813">Transport</keyword>
<keyword id="KW-0830">Ubiquinone</keyword>
<dbReference type="EC" id="7.1.1.-" evidence="1"/>
<dbReference type="EMBL" id="AF057063">
    <property type="protein sequence ID" value="AAC38640.1"/>
    <property type="molecule type" value="Genomic_DNA"/>
</dbReference>
<dbReference type="RefSeq" id="WP_010278904.1">
    <property type="nucleotide sequence ID" value="NZ_VBUA01000017.1"/>
</dbReference>
<dbReference type="SMR" id="O85273"/>
<dbReference type="GO" id="GO:0030964">
    <property type="term" value="C:NADH dehydrogenase complex"/>
    <property type="evidence" value="ECO:0007669"/>
    <property type="project" value="TreeGrafter"/>
</dbReference>
<dbReference type="GO" id="GO:0005886">
    <property type="term" value="C:plasma membrane"/>
    <property type="evidence" value="ECO:0007669"/>
    <property type="project" value="UniProtKB-SubCell"/>
</dbReference>
<dbReference type="GO" id="GO:0008137">
    <property type="term" value="F:NADH dehydrogenase (ubiquinone) activity"/>
    <property type="evidence" value="ECO:0007669"/>
    <property type="project" value="InterPro"/>
</dbReference>
<dbReference type="GO" id="GO:0050136">
    <property type="term" value="F:NADH:ubiquinone reductase (non-electrogenic) activity"/>
    <property type="evidence" value="ECO:0007669"/>
    <property type="project" value="UniProtKB-UniRule"/>
</dbReference>
<dbReference type="GO" id="GO:0048038">
    <property type="term" value="F:quinone binding"/>
    <property type="evidence" value="ECO:0007669"/>
    <property type="project" value="UniProtKB-KW"/>
</dbReference>
<dbReference type="FunFam" id="1.20.58.1610:FF:000003">
    <property type="entry name" value="NADH-quinone oxidoreductase subunit A"/>
    <property type="match status" value="1"/>
</dbReference>
<dbReference type="Gene3D" id="1.20.58.1610">
    <property type="entry name" value="NADH:ubiquinone/plastoquinone oxidoreductase, chain 3"/>
    <property type="match status" value="1"/>
</dbReference>
<dbReference type="HAMAP" id="MF_01394">
    <property type="entry name" value="NDH1_NuoA"/>
    <property type="match status" value="1"/>
</dbReference>
<dbReference type="InterPro" id="IPR023043">
    <property type="entry name" value="NAD(P)H_OxRDtase_bac/plastid"/>
</dbReference>
<dbReference type="InterPro" id="IPR000440">
    <property type="entry name" value="NADH_UbQ/plastoQ_OxRdtase_su3"/>
</dbReference>
<dbReference type="InterPro" id="IPR038430">
    <property type="entry name" value="NDAH_ubi_oxred_su3_sf"/>
</dbReference>
<dbReference type="PANTHER" id="PTHR11058:SF21">
    <property type="entry name" value="NADH-QUINONE OXIDOREDUCTASE SUBUNIT A"/>
    <property type="match status" value="1"/>
</dbReference>
<dbReference type="PANTHER" id="PTHR11058">
    <property type="entry name" value="NADH-UBIQUINONE OXIDOREDUCTASE CHAIN 3"/>
    <property type="match status" value="1"/>
</dbReference>
<dbReference type="Pfam" id="PF00507">
    <property type="entry name" value="Oxidored_q4"/>
    <property type="match status" value="1"/>
</dbReference>
<gene>
    <name evidence="1" type="primary">nuoA</name>
</gene>
<proteinExistence type="inferred from homology"/>
<organism>
    <name type="scientific">Pectobacterium carotovorum subsp. carotovorum</name>
    <name type="common">Erwinia carotovora subsp. carotovora</name>
    <dbReference type="NCBI Taxonomy" id="555"/>
    <lineage>
        <taxon>Bacteria</taxon>
        <taxon>Pseudomonadati</taxon>
        <taxon>Pseudomonadota</taxon>
        <taxon>Gammaproteobacteria</taxon>
        <taxon>Enterobacterales</taxon>
        <taxon>Pectobacteriaceae</taxon>
        <taxon>Pectobacterium</taxon>
    </lineage>
</organism>
<accession>O85273</accession>
<evidence type="ECO:0000255" key="1">
    <source>
        <dbReference type="HAMAP-Rule" id="MF_01394"/>
    </source>
</evidence>
<feature type="chain" id="PRO_0000117869" description="NADH-quinone oxidoreductase subunit A">
    <location>
        <begin position="1"/>
        <end position="146"/>
    </location>
</feature>
<feature type="transmembrane region" description="Helical" evidence="1">
    <location>
        <begin position="14"/>
        <end position="34"/>
    </location>
</feature>
<feature type="transmembrane region" description="Helical" evidence="1">
    <location>
        <begin position="68"/>
        <end position="88"/>
    </location>
</feature>
<feature type="transmembrane region" description="Helical" evidence="1">
    <location>
        <begin position="96"/>
        <end position="116"/>
    </location>
</feature>